<proteinExistence type="inferred from homology"/>
<sequence>MSTHLTETWEKAINIIKGELTEVSFNTWIKSINPISLENNSLKLAVPNDFTKGILESRYKDLIVNALKLLTSKKYNIDFIVTTEEKIEKNHNNEKSNIVVNDEMSTMLNPKYTFDSFVIGNSNRFAHAASLAVAESPAKAYNPLFIYGGVGLGKTHLMHAIGHYILHNNPKSQVVYVSSEKFTNELINSIKDDKNVEFRNKYRNIDILLVDDIQFIAGKERTQEEFFHTFNALYEANKQIIISSDRPPKEIPTLEDRLRSRFEWGLIADIQAPDFETRMAILKKKADVEKLNIPNEVMVYIATKIKSNIRELEGALIRIVAFSSLTNKEISVDLASEALKDIISSKQTRQVTIDIIQEVVANYYNLKIEDLKSARRTRNIAFPRQIAMYLSRKLTDMSLPKIGEEFGGRDHTTVIHAYEKISNNLKKDESLQNAINDLNKRINQK</sequence>
<gene>
    <name evidence="1" type="primary">dnaA</name>
    <name type="ordered locus">CLK_3133</name>
</gene>
<accession>B1L1K6</accession>
<organism>
    <name type="scientific">Clostridium botulinum (strain Loch Maree / Type A3)</name>
    <dbReference type="NCBI Taxonomy" id="498214"/>
    <lineage>
        <taxon>Bacteria</taxon>
        <taxon>Bacillati</taxon>
        <taxon>Bacillota</taxon>
        <taxon>Clostridia</taxon>
        <taxon>Eubacteriales</taxon>
        <taxon>Clostridiaceae</taxon>
        <taxon>Clostridium</taxon>
    </lineage>
</organism>
<comment type="function">
    <text evidence="1">Plays an essential role in the initiation and regulation of chromosomal replication. ATP-DnaA binds to the origin of replication (oriC) to initiate formation of the DNA replication initiation complex once per cell cycle. Binds the DnaA box (a 9 base pair repeat at the origin) and separates the double-stranded (ds)DNA. Forms a right-handed helical filament on oriC DNA; dsDNA binds to the exterior of the filament while single-stranded (ss)DNA is stabiized in the filament's interior. The ATP-DnaA-oriC complex binds and stabilizes one strand of the AT-rich DNA unwinding element (DUE), permitting loading of DNA polymerase. After initiation quickly degrades to an ADP-DnaA complex that is not apt for DNA replication. Binds acidic phospholipids.</text>
</comment>
<comment type="subunit">
    <text evidence="1">Oligomerizes as a right-handed, spiral filament on DNA at oriC.</text>
</comment>
<comment type="subcellular location">
    <subcellularLocation>
        <location evidence="1">Cytoplasm</location>
    </subcellularLocation>
</comment>
<comment type="domain">
    <text evidence="1">Domain I is involved in oligomerization and binding regulators, domain II is flexibile and of varying length in different bacteria, domain III forms the AAA+ region, while domain IV binds dsDNA.</text>
</comment>
<comment type="similarity">
    <text evidence="1">Belongs to the DnaA family.</text>
</comment>
<dbReference type="EMBL" id="CP000962">
    <property type="protein sequence ID" value="ACA55902.1"/>
    <property type="molecule type" value="Genomic_DNA"/>
</dbReference>
<dbReference type="RefSeq" id="WP_012343824.1">
    <property type="nucleotide sequence ID" value="NC_010520.1"/>
</dbReference>
<dbReference type="SMR" id="B1L1K6"/>
<dbReference type="KEGG" id="cbl:CLK_3133"/>
<dbReference type="HOGENOM" id="CLU_026910_3_1_9"/>
<dbReference type="GO" id="GO:0005737">
    <property type="term" value="C:cytoplasm"/>
    <property type="evidence" value="ECO:0007669"/>
    <property type="project" value="UniProtKB-SubCell"/>
</dbReference>
<dbReference type="GO" id="GO:0005886">
    <property type="term" value="C:plasma membrane"/>
    <property type="evidence" value="ECO:0007669"/>
    <property type="project" value="TreeGrafter"/>
</dbReference>
<dbReference type="GO" id="GO:0005524">
    <property type="term" value="F:ATP binding"/>
    <property type="evidence" value="ECO:0007669"/>
    <property type="project" value="UniProtKB-UniRule"/>
</dbReference>
<dbReference type="GO" id="GO:0016887">
    <property type="term" value="F:ATP hydrolysis activity"/>
    <property type="evidence" value="ECO:0007669"/>
    <property type="project" value="InterPro"/>
</dbReference>
<dbReference type="GO" id="GO:0003688">
    <property type="term" value="F:DNA replication origin binding"/>
    <property type="evidence" value="ECO:0007669"/>
    <property type="project" value="UniProtKB-UniRule"/>
</dbReference>
<dbReference type="GO" id="GO:0008289">
    <property type="term" value="F:lipid binding"/>
    <property type="evidence" value="ECO:0007669"/>
    <property type="project" value="UniProtKB-KW"/>
</dbReference>
<dbReference type="GO" id="GO:0006270">
    <property type="term" value="P:DNA replication initiation"/>
    <property type="evidence" value="ECO:0007669"/>
    <property type="project" value="UniProtKB-UniRule"/>
</dbReference>
<dbReference type="GO" id="GO:0006275">
    <property type="term" value="P:regulation of DNA replication"/>
    <property type="evidence" value="ECO:0007669"/>
    <property type="project" value="UniProtKB-UniRule"/>
</dbReference>
<dbReference type="CDD" id="cd00009">
    <property type="entry name" value="AAA"/>
    <property type="match status" value="1"/>
</dbReference>
<dbReference type="CDD" id="cd06571">
    <property type="entry name" value="Bac_DnaA_C"/>
    <property type="match status" value="1"/>
</dbReference>
<dbReference type="FunFam" id="1.10.1750.10:FF:000003">
    <property type="entry name" value="Chromosomal replication initiator protein DnaA"/>
    <property type="match status" value="1"/>
</dbReference>
<dbReference type="FunFam" id="1.10.8.60:FF:000003">
    <property type="entry name" value="Chromosomal replication initiator protein DnaA"/>
    <property type="match status" value="1"/>
</dbReference>
<dbReference type="FunFam" id="3.40.50.300:FF:000150">
    <property type="entry name" value="Chromosomal replication initiator protein DnaA"/>
    <property type="match status" value="1"/>
</dbReference>
<dbReference type="Gene3D" id="1.10.1750.10">
    <property type="match status" value="1"/>
</dbReference>
<dbReference type="Gene3D" id="1.10.8.60">
    <property type="match status" value="1"/>
</dbReference>
<dbReference type="Gene3D" id="3.30.300.180">
    <property type="match status" value="1"/>
</dbReference>
<dbReference type="Gene3D" id="3.40.50.300">
    <property type="entry name" value="P-loop containing nucleotide triphosphate hydrolases"/>
    <property type="match status" value="1"/>
</dbReference>
<dbReference type="HAMAP" id="MF_00377">
    <property type="entry name" value="DnaA_bact"/>
    <property type="match status" value="1"/>
</dbReference>
<dbReference type="InterPro" id="IPR003593">
    <property type="entry name" value="AAA+_ATPase"/>
</dbReference>
<dbReference type="InterPro" id="IPR001957">
    <property type="entry name" value="Chromosome_initiator_DnaA"/>
</dbReference>
<dbReference type="InterPro" id="IPR020591">
    <property type="entry name" value="Chromosome_initiator_DnaA-like"/>
</dbReference>
<dbReference type="InterPro" id="IPR018312">
    <property type="entry name" value="Chromosome_initiator_DnaA_CS"/>
</dbReference>
<dbReference type="InterPro" id="IPR013159">
    <property type="entry name" value="DnaA_C"/>
</dbReference>
<dbReference type="InterPro" id="IPR013317">
    <property type="entry name" value="DnaA_dom"/>
</dbReference>
<dbReference type="InterPro" id="IPR024633">
    <property type="entry name" value="DnaA_N_dom"/>
</dbReference>
<dbReference type="InterPro" id="IPR038454">
    <property type="entry name" value="DnaA_N_sf"/>
</dbReference>
<dbReference type="InterPro" id="IPR027417">
    <property type="entry name" value="P-loop_NTPase"/>
</dbReference>
<dbReference type="InterPro" id="IPR010921">
    <property type="entry name" value="Trp_repressor/repl_initiator"/>
</dbReference>
<dbReference type="NCBIfam" id="TIGR00362">
    <property type="entry name" value="DnaA"/>
    <property type="match status" value="1"/>
</dbReference>
<dbReference type="NCBIfam" id="NF010686">
    <property type="entry name" value="PRK14086.1"/>
    <property type="match status" value="1"/>
</dbReference>
<dbReference type="PANTHER" id="PTHR30050">
    <property type="entry name" value="CHROMOSOMAL REPLICATION INITIATOR PROTEIN DNAA"/>
    <property type="match status" value="1"/>
</dbReference>
<dbReference type="PANTHER" id="PTHR30050:SF2">
    <property type="entry name" value="CHROMOSOMAL REPLICATION INITIATOR PROTEIN DNAA"/>
    <property type="match status" value="1"/>
</dbReference>
<dbReference type="Pfam" id="PF00308">
    <property type="entry name" value="Bac_DnaA"/>
    <property type="match status" value="1"/>
</dbReference>
<dbReference type="Pfam" id="PF08299">
    <property type="entry name" value="Bac_DnaA_C"/>
    <property type="match status" value="1"/>
</dbReference>
<dbReference type="Pfam" id="PF11638">
    <property type="entry name" value="DnaA_N"/>
    <property type="match status" value="1"/>
</dbReference>
<dbReference type="PRINTS" id="PR00051">
    <property type="entry name" value="DNAA"/>
</dbReference>
<dbReference type="SMART" id="SM00382">
    <property type="entry name" value="AAA"/>
    <property type="match status" value="1"/>
</dbReference>
<dbReference type="SMART" id="SM00760">
    <property type="entry name" value="Bac_DnaA_C"/>
    <property type="match status" value="1"/>
</dbReference>
<dbReference type="SUPFAM" id="SSF52540">
    <property type="entry name" value="P-loop containing nucleoside triphosphate hydrolases"/>
    <property type="match status" value="1"/>
</dbReference>
<dbReference type="SUPFAM" id="SSF48295">
    <property type="entry name" value="TrpR-like"/>
    <property type="match status" value="1"/>
</dbReference>
<dbReference type="PROSITE" id="PS01008">
    <property type="entry name" value="DNAA"/>
    <property type="match status" value="1"/>
</dbReference>
<name>DNAA_CLOBM</name>
<reference key="1">
    <citation type="journal article" date="2007" name="PLoS ONE">
        <title>Analysis of the neurotoxin complex genes in Clostridium botulinum A1-A4 and B1 strains: BoNT/A3, /Ba4 and /B1 clusters are located within plasmids.</title>
        <authorList>
            <person name="Smith T.J."/>
            <person name="Hill K.K."/>
            <person name="Foley B.T."/>
            <person name="Detter J.C."/>
            <person name="Munk A.C."/>
            <person name="Bruce D.C."/>
            <person name="Doggett N.A."/>
            <person name="Smith L.A."/>
            <person name="Marks J.D."/>
            <person name="Xie G."/>
            <person name="Brettin T.S."/>
        </authorList>
    </citation>
    <scope>NUCLEOTIDE SEQUENCE [LARGE SCALE GENOMIC DNA]</scope>
    <source>
        <strain>Loch Maree / Type A3</strain>
    </source>
</reference>
<keyword id="KW-0067">ATP-binding</keyword>
<keyword id="KW-0963">Cytoplasm</keyword>
<keyword id="KW-0235">DNA replication</keyword>
<keyword id="KW-0238">DNA-binding</keyword>
<keyword id="KW-0446">Lipid-binding</keyword>
<keyword id="KW-0547">Nucleotide-binding</keyword>
<feature type="chain" id="PRO_1000121964" description="Chromosomal replication initiator protein DnaA">
    <location>
        <begin position="1"/>
        <end position="445"/>
    </location>
</feature>
<feature type="region of interest" description="Domain I, interacts with DnaA modulators" evidence="1">
    <location>
        <begin position="1"/>
        <end position="73"/>
    </location>
</feature>
<feature type="region of interest" description="Domain II" evidence="1">
    <location>
        <begin position="73"/>
        <end position="106"/>
    </location>
</feature>
<feature type="region of interest" description="Domain III, AAA+ region" evidence="1">
    <location>
        <begin position="107"/>
        <end position="323"/>
    </location>
</feature>
<feature type="region of interest" description="Domain IV, binds dsDNA" evidence="1">
    <location>
        <begin position="324"/>
        <end position="445"/>
    </location>
</feature>
<feature type="binding site" evidence="1">
    <location>
        <position position="151"/>
    </location>
    <ligand>
        <name>ATP</name>
        <dbReference type="ChEBI" id="CHEBI:30616"/>
    </ligand>
</feature>
<feature type="binding site" evidence="1">
    <location>
        <position position="153"/>
    </location>
    <ligand>
        <name>ATP</name>
        <dbReference type="ChEBI" id="CHEBI:30616"/>
    </ligand>
</feature>
<feature type="binding site" evidence="1">
    <location>
        <position position="154"/>
    </location>
    <ligand>
        <name>ATP</name>
        <dbReference type="ChEBI" id="CHEBI:30616"/>
    </ligand>
</feature>
<feature type="binding site" evidence="1">
    <location>
        <position position="155"/>
    </location>
    <ligand>
        <name>ATP</name>
        <dbReference type="ChEBI" id="CHEBI:30616"/>
    </ligand>
</feature>
<evidence type="ECO:0000255" key="1">
    <source>
        <dbReference type="HAMAP-Rule" id="MF_00377"/>
    </source>
</evidence>
<protein>
    <recommendedName>
        <fullName evidence="1">Chromosomal replication initiator protein DnaA</fullName>
    </recommendedName>
</protein>